<keyword id="KW-1185">Reference proteome</keyword>
<accession>Q5UP84</accession>
<name>YL003_MIMIV</name>
<organism>
    <name type="scientific">Acanthamoeba polyphaga mimivirus</name>
    <name type="common">APMV</name>
    <dbReference type="NCBI Taxonomy" id="212035"/>
    <lineage>
        <taxon>Viruses</taxon>
        <taxon>Varidnaviria</taxon>
        <taxon>Bamfordvirae</taxon>
        <taxon>Nucleocytoviricota</taxon>
        <taxon>Megaviricetes</taxon>
        <taxon>Imitervirales</taxon>
        <taxon>Mimiviridae</taxon>
        <taxon>Megamimivirinae</taxon>
        <taxon>Mimivirus</taxon>
        <taxon>Mimivirus bradfordmassiliense</taxon>
    </lineage>
</organism>
<reference key="1">
    <citation type="journal article" date="2004" name="Science">
        <title>The 1.2-megabase genome sequence of Mimivirus.</title>
        <authorList>
            <person name="Raoult D."/>
            <person name="Audic S."/>
            <person name="Robert C."/>
            <person name="Abergel C."/>
            <person name="Renesto P."/>
            <person name="Ogata H."/>
            <person name="La Scola B."/>
            <person name="Susan M."/>
            <person name="Claverie J.-M."/>
        </authorList>
    </citation>
    <scope>NUCLEOTIDE SEQUENCE [LARGE SCALE GENOMIC DNA]</scope>
    <source>
        <strain>Rowbotham-Bradford</strain>
    </source>
</reference>
<proteinExistence type="predicted"/>
<dbReference type="EMBL" id="AY653733">
    <property type="protein sequence ID" value="AAV50278.1"/>
    <property type="molecule type" value="Genomic_DNA"/>
</dbReference>
<dbReference type="KEGG" id="vg:9924572"/>
<dbReference type="OrthoDB" id="30759at10239"/>
<dbReference type="Proteomes" id="UP000001134">
    <property type="component" value="Genome"/>
</dbReference>
<organismHost>
    <name type="scientific">Acanthamoeba polyphaga</name>
    <name type="common">Amoeba</name>
    <dbReference type="NCBI Taxonomy" id="5757"/>
</organismHost>
<feature type="chain" id="PRO_0000253220" description="Uncharacterized protein L3">
    <location>
        <begin position="1"/>
        <end position="666"/>
    </location>
</feature>
<gene>
    <name type="ordered locus">MIMI_L3</name>
</gene>
<sequence>MAKKVDQTNLISNIKSLTLSGYVKKADRNIIVEDLIILKDKLLEQNNPEAKDNASTLNKVIKALDMDKMSKKEKDLWKNSKKSLIGIVNGYYESYKNTNNQDYDKNNSKNNSKKNNLNIDEVEKILDGKILSYNKFNENHPMNGVSYDKSKNLYIVNHDNVIKKFKTLQCATGYIINLGEELGKKNSKSFQKDTENENIIKKYFQYGGYYFLVYFISGIMYFDIQHIISVLNLKNSCVRKKREEFADNISKHIWFKNEHDGYIKRELVTEEIMYNIILSSNSTFSKSFKTEVSKILVQLRENGELDFVDDKIVLKDKSKRGLRSRYEVNKMVNEITDHGFDNLAEQQSIPFMYGNLSNVEVIRNMISMGNRIEVSTYHKDHVMYVFVIPIKQDHNHIIIKIGYSFDIVDRIKTLRNEYKSRVYLIRLKFVRGESDEDEFHKIIKQSYPHLIEEVNINNKSKTELYKFHPILIEQFDGYMNEFNNNKKIKKAPILTPEESVIVQEVKTQDSVFLQQLMEFKNNSDSVNKYIYDLIVLREKYDHELRVLEYKKNMVKMKYETHDQMKEYMNLKIKYLEVKNKYLNTIRSKNSDKPKYLCSDDLENSDLEDSDLENSDLENSEDLEKIVPNKIRMTKSAPPTSRKYTTVKSSSISRIPLRKSCSKIIEL</sequence>
<protein>
    <recommendedName>
        <fullName>Uncharacterized protein L3</fullName>
    </recommendedName>
</protein>